<keyword id="KW-0884">PQQ biosynthesis</keyword>
<comment type="function">
    <text evidence="1">Required for coenzyme pyrroloquinoline quinone (PQQ) biosynthesis. PQQ is probably formed by cross-linking a specific glutamate to a specific tyrosine residue and excising these residues from the peptide.</text>
</comment>
<comment type="pathway">
    <text evidence="1">Cofactor biosynthesis; pyrroloquinoline quinone biosynthesis.</text>
</comment>
<comment type="similarity">
    <text evidence="1">Belongs to the PqqA family.</text>
</comment>
<proteinExistence type="inferred from homology"/>
<gene>
    <name evidence="1" type="primary">pqqA</name>
    <name type="ordered locus">KPK_2545</name>
</gene>
<organism>
    <name type="scientific">Klebsiella pneumoniae (strain 342)</name>
    <dbReference type="NCBI Taxonomy" id="507522"/>
    <lineage>
        <taxon>Bacteria</taxon>
        <taxon>Pseudomonadati</taxon>
        <taxon>Pseudomonadota</taxon>
        <taxon>Gammaproteobacteria</taxon>
        <taxon>Enterobacterales</taxon>
        <taxon>Enterobacteriaceae</taxon>
        <taxon>Klebsiella/Raoultella group</taxon>
        <taxon>Klebsiella</taxon>
        <taxon>Klebsiella pneumoniae complex</taxon>
    </lineage>
</organism>
<feature type="chain" id="PRO_1000131198" description="Coenzyme PQQ synthesis protein A">
    <location>
        <begin position="1"/>
        <end position="23"/>
    </location>
</feature>
<feature type="cross-link" description="Pyrroloquinoline quinone (Glu-Tyr)" evidence="1">
    <location>
        <begin position="15"/>
        <end position="19"/>
    </location>
</feature>
<accession>B5XX62</accession>
<protein>
    <recommendedName>
        <fullName evidence="1">Coenzyme PQQ synthesis protein A</fullName>
    </recommendedName>
    <alternativeName>
        <fullName evidence="1">Pyrroloquinoline quinone biosynthesis protein A</fullName>
    </alternativeName>
</protein>
<evidence type="ECO:0000255" key="1">
    <source>
        <dbReference type="HAMAP-Rule" id="MF_00656"/>
    </source>
</evidence>
<dbReference type="EMBL" id="CP000964">
    <property type="protein sequence ID" value="ACI09106.1"/>
    <property type="molecule type" value="Genomic_DNA"/>
</dbReference>
<dbReference type="KEGG" id="kpe:KPK_2545"/>
<dbReference type="HOGENOM" id="CLU_219131_1_0_6"/>
<dbReference type="UniPathway" id="UPA00539"/>
<dbReference type="Proteomes" id="UP000001734">
    <property type="component" value="Chromosome"/>
</dbReference>
<dbReference type="GO" id="GO:0018189">
    <property type="term" value="P:pyrroloquinoline quinone biosynthetic process"/>
    <property type="evidence" value="ECO:0007669"/>
    <property type="project" value="UniProtKB-UniRule"/>
</dbReference>
<dbReference type="HAMAP" id="MF_00656">
    <property type="entry name" value="PQQ_syn_PqqA"/>
    <property type="match status" value="1"/>
</dbReference>
<dbReference type="InterPro" id="IPR011725">
    <property type="entry name" value="PQQ_synth_PqqA"/>
</dbReference>
<dbReference type="NCBIfam" id="TIGR02107">
    <property type="entry name" value="PQQ_syn_pqqA"/>
    <property type="match status" value="1"/>
</dbReference>
<dbReference type="Pfam" id="PF08042">
    <property type="entry name" value="PqqA"/>
    <property type="match status" value="1"/>
</dbReference>
<sequence>MWKKPAFIDLRLGLEVTLYISNR</sequence>
<reference key="1">
    <citation type="journal article" date="2008" name="PLoS Genet.">
        <title>Complete genome sequence of the N2-fixing broad host range endophyte Klebsiella pneumoniae 342 and virulence predictions verified in mice.</title>
        <authorList>
            <person name="Fouts D.E."/>
            <person name="Tyler H.L."/>
            <person name="DeBoy R.T."/>
            <person name="Daugherty S."/>
            <person name="Ren Q."/>
            <person name="Badger J.H."/>
            <person name="Durkin A.S."/>
            <person name="Huot H."/>
            <person name="Shrivastava S."/>
            <person name="Kothari S."/>
            <person name="Dodson R.J."/>
            <person name="Mohamoud Y."/>
            <person name="Khouri H."/>
            <person name="Roesch L.F.W."/>
            <person name="Krogfelt K.A."/>
            <person name="Struve C."/>
            <person name="Triplett E.W."/>
            <person name="Methe B.A."/>
        </authorList>
    </citation>
    <scope>NUCLEOTIDE SEQUENCE [LARGE SCALE GENOMIC DNA]</scope>
    <source>
        <strain>342</strain>
    </source>
</reference>
<name>PQQA_KLEP3</name>